<dbReference type="EC" id="2.4.1.-" evidence="1"/>
<dbReference type="EMBL" id="BC116127">
    <property type="protein sequence ID" value="AAI16128.1"/>
    <property type="molecule type" value="mRNA"/>
</dbReference>
<dbReference type="RefSeq" id="NP_001071523.1">
    <property type="nucleotide sequence ID" value="NM_001078055.1"/>
</dbReference>
<dbReference type="FunCoup" id="Q1LZA0">
    <property type="interactions" value="4182"/>
</dbReference>
<dbReference type="STRING" id="9913.ENSBTAP00000016934"/>
<dbReference type="CAZy" id="GT22">
    <property type="family name" value="Glycosyltransferase Family 22"/>
</dbReference>
<dbReference type="GlyCosmos" id="Q1LZA0">
    <property type="glycosylation" value="2 sites, No reported glycans"/>
</dbReference>
<dbReference type="GlyGen" id="Q1LZA0">
    <property type="glycosylation" value="2 sites"/>
</dbReference>
<dbReference type="GeneID" id="616044"/>
<dbReference type="KEGG" id="bta:616044"/>
<dbReference type="CTD" id="9488"/>
<dbReference type="VEuPathDB" id="HostDB:ENSBTAG00000012740"/>
<dbReference type="InParanoid" id="Q1LZA0"/>
<dbReference type="OMA" id="HHMVFNN"/>
<dbReference type="OrthoDB" id="416834at2759"/>
<dbReference type="Reactome" id="R-BTA-162710">
    <property type="pathway name" value="Synthesis of glycosylphosphatidylinositol (GPI)"/>
</dbReference>
<dbReference type="UniPathway" id="UPA00196"/>
<dbReference type="Proteomes" id="UP000009136">
    <property type="component" value="Chromosome 10"/>
</dbReference>
<dbReference type="Bgee" id="ENSBTAG00000012740">
    <property type="expression patterns" value="Expressed in neutrophil and 104 other cell types or tissues"/>
</dbReference>
<dbReference type="GO" id="GO:0005789">
    <property type="term" value="C:endoplasmic reticulum membrane"/>
    <property type="evidence" value="ECO:0000318"/>
    <property type="project" value="GO_Central"/>
</dbReference>
<dbReference type="GO" id="GO:0000026">
    <property type="term" value="F:alpha-1,2-mannosyltransferase activity"/>
    <property type="evidence" value="ECO:0000318"/>
    <property type="project" value="GO_Central"/>
</dbReference>
<dbReference type="GO" id="GO:0006506">
    <property type="term" value="P:GPI anchor biosynthetic process"/>
    <property type="evidence" value="ECO:0000318"/>
    <property type="project" value="GO_Central"/>
</dbReference>
<dbReference type="InterPro" id="IPR005599">
    <property type="entry name" value="GPI_mannosylTrfase"/>
</dbReference>
<dbReference type="PANTHER" id="PTHR22760">
    <property type="entry name" value="GLYCOSYLTRANSFERASE"/>
    <property type="match status" value="1"/>
</dbReference>
<dbReference type="PANTHER" id="PTHR22760:SF4">
    <property type="entry name" value="GPI MANNOSYLTRANSFERASE 3"/>
    <property type="match status" value="1"/>
</dbReference>
<dbReference type="Pfam" id="PF03901">
    <property type="entry name" value="Glyco_transf_22"/>
    <property type="match status" value="1"/>
</dbReference>
<evidence type="ECO:0000250" key="1">
    <source>
        <dbReference type="UniProtKB" id="Q92521"/>
    </source>
</evidence>
<evidence type="ECO:0000255" key="2"/>
<evidence type="ECO:0000305" key="3"/>
<name>PIGB_BOVIN</name>
<comment type="function">
    <text evidence="1">Alpha-1,2-mannosyltransferase that catalyzes the transfer of the third mannose, via an alpha-1,2 bond, from a dolichol-phosphate-mannose (Dol-P-Man) to an alpha-D-Man-(1-&gt;6)-2-PEtn-alpha-D-Man-(1-&gt;4)-alpha-D-GlcN-(1-&gt;6)-(1-radyl,2-acyl-sn-glycero-3-phospho)-2-acyl-inositol intermediate to generate an alpha-D-Man-(1-&gt;2)-alpha-D-Man-(1-&gt;6)-2-PEtn-alpha-D-Man-(1-&gt;4)-alpha-D-GlcN-(1-&gt;6)-(1-radyl,2-acyl-sn-glycero-3-phospho)-2-acyl-inositol (also termed H6) and participates in the nineth step of the glycosylphosphatidylinositol-anchor biosynthesis (By similarity). May also add the third mannose to an alpha-D-Man-(1-&gt;6)-alpha-D-Man-(1-&gt;4)-alpha-D-GlcN-(1-&gt;6)-(1-radyl,2-acyl-sn-glycero-3-phospho)-2-acyl-inositol (also termed H3) intermediate generating an alpha-D-Man-(1-&gt;2)-alpha-D-Man-(1-&gt;6)-alpha-D-Man-(1-&gt;4)-alpha-D-GlcN-(1-&gt;6)-(1-radyl,2-acyl-sn-glycero-3-phospho)-2-acyl-inositol (also termed H4) (By similarity).</text>
</comment>
<comment type="pathway">
    <text evidence="1">Glycolipid biosynthesis; glycosylphosphatidylinositol-anchor biosynthesis.</text>
</comment>
<comment type="subcellular location">
    <subcellularLocation>
        <location evidence="1">Endoplasmic reticulum membrane</location>
        <topology evidence="2">Multi-pass membrane protein</topology>
    </subcellularLocation>
</comment>
<comment type="similarity">
    <text evidence="3">Belongs to the glycosyltransferase 22 family. PIGB subfamily.</text>
</comment>
<keyword id="KW-0256">Endoplasmic reticulum</keyword>
<keyword id="KW-0325">Glycoprotein</keyword>
<keyword id="KW-0328">Glycosyltransferase</keyword>
<keyword id="KW-0337">GPI-anchor biosynthesis</keyword>
<keyword id="KW-0472">Membrane</keyword>
<keyword id="KW-1185">Reference proteome</keyword>
<keyword id="KW-0808">Transferase</keyword>
<keyword id="KW-0812">Transmembrane</keyword>
<keyword id="KW-1133">Transmembrane helix</keyword>
<protein>
    <recommendedName>
        <fullName evidence="1">GPI alpha-1,2-mannosyltransferase 3</fullName>
        <ecNumber evidence="1">2.4.1.-</ecNumber>
    </recommendedName>
    <alternativeName>
        <fullName>GPI mannosyltransferase III</fullName>
        <shortName>GPI-MT-III</shortName>
    </alternativeName>
    <alternativeName>
        <fullName evidence="1">Phosphatidylinositol-glycan biosynthesis class B protein</fullName>
        <shortName evidence="1">PIG-B</shortName>
    </alternativeName>
</protein>
<sequence length="541" mass="63591">MERDDGGGGGLFFRGLQNRSHEKTKLRTRKSTLYLSPQKSTGRCGDLGENIYLVLFIIALRICNCFLVQTSFVPDEYWQSLEVAHRMVFNYGYLTWEWTERLRGYTYPLIFASIYKILHLLGKDSVHLLIWIPRLAQALLSAIADLRLYSLMKQLENQQVARWVFFCQLCSWFTWYCCTRTLTNTMETVLTIIALFYYPLEGSKSMNSVKYSSLVALAFIIRPTAVIPWIPLLFRHFWQEQRKLDLILHQFLPVGFVTLSLSLIIDRIFFGQWTLVQYNFLKFNVLQDLGSFYGSHPWHWYFSQGFPAVLGTHLPFFIHGCFLAPKRYRIFLVTVLWTLLVYSMLSHKEFRFIYPVLPFCMVFCGYSLNNLKTWKKPALSFLFLSNMLLALYTGLVHQRGTLDVMTNIQELSYNNTNVSSASVLMMMPCHSTPYYSHVHYPLPMRFLQCPPDLTGKTDYLVEADMFYLNPLKWLYMEFQNDSQLPTHLIMFSVLEEEISPFLISNNYERTAVFFHTHFPESRTGSHIYVYERKLKGKLNQR</sequence>
<feature type="chain" id="PRO_0000246250" description="GPI alpha-1,2-mannosyltransferase 3">
    <location>
        <begin position="1"/>
        <end position="541"/>
    </location>
</feature>
<feature type="transmembrane region" description="Helical" evidence="2">
    <location>
        <begin position="53"/>
        <end position="73"/>
    </location>
</feature>
<feature type="transmembrane region" description="Helical" evidence="2">
    <location>
        <begin position="126"/>
        <end position="146"/>
    </location>
</feature>
<feature type="transmembrane region" description="Helical" evidence="2">
    <location>
        <begin position="182"/>
        <end position="202"/>
    </location>
</feature>
<feature type="transmembrane region" description="Helical" evidence="2">
    <location>
        <begin position="214"/>
        <end position="234"/>
    </location>
</feature>
<feature type="transmembrane region" description="Helical" evidence="2">
    <location>
        <begin position="245"/>
        <end position="265"/>
    </location>
</feature>
<feature type="transmembrane region" description="Helical" evidence="2">
    <location>
        <begin position="305"/>
        <end position="325"/>
    </location>
</feature>
<feature type="transmembrane region" description="Helical" evidence="2">
    <location>
        <begin position="330"/>
        <end position="350"/>
    </location>
</feature>
<feature type="transmembrane region" description="Helical" evidence="2">
    <location>
        <begin position="352"/>
        <end position="372"/>
    </location>
</feature>
<feature type="transmembrane region" description="Helical" evidence="2">
    <location>
        <begin position="377"/>
        <end position="397"/>
    </location>
</feature>
<feature type="glycosylation site" description="N-linked (GlcNAc...) asparagine" evidence="2">
    <location>
        <position position="18"/>
    </location>
</feature>
<feature type="glycosylation site" description="N-linked (GlcNAc...) asparagine" evidence="2">
    <location>
        <position position="417"/>
    </location>
</feature>
<gene>
    <name evidence="1" type="primary">PIGB</name>
</gene>
<organism>
    <name type="scientific">Bos taurus</name>
    <name type="common">Bovine</name>
    <dbReference type="NCBI Taxonomy" id="9913"/>
    <lineage>
        <taxon>Eukaryota</taxon>
        <taxon>Metazoa</taxon>
        <taxon>Chordata</taxon>
        <taxon>Craniata</taxon>
        <taxon>Vertebrata</taxon>
        <taxon>Euteleostomi</taxon>
        <taxon>Mammalia</taxon>
        <taxon>Eutheria</taxon>
        <taxon>Laurasiatheria</taxon>
        <taxon>Artiodactyla</taxon>
        <taxon>Ruminantia</taxon>
        <taxon>Pecora</taxon>
        <taxon>Bovidae</taxon>
        <taxon>Bovinae</taxon>
        <taxon>Bos</taxon>
    </lineage>
</organism>
<accession>Q1LZA0</accession>
<proteinExistence type="evidence at transcript level"/>
<reference key="1">
    <citation type="submission" date="2006-05" db="EMBL/GenBank/DDBJ databases">
        <authorList>
            <consortium name="NIH - Mammalian Gene Collection (MGC) project"/>
        </authorList>
    </citation>
    <scope>NUCLEOTIDE SEQUENCE [LARGE SCALE MRNA]</scope>
    <source>
        <strain>Hereford</strain>
        <tissue>Ascending colon</tissue>
    </source>
</reference>